<evidence type="ECO:0000255" key="1">
    <source>
        <dbReference type="HAMAP-Rule" id="MF_00071"/>
    </source>
</evidence>
<comment type="function">
    <text evidence="1">Required for accurate and efficient protein synthesis under certain stress conditions. May act as a fidelity factor of the translation reaction, by catalyzing a one-codon backward translocation of tRNAs on improperly translocated ribosomes. Back-translocation proceeds from a post-translocation (POST) complex to a pre-translocation (PRE) complex, thus giving elongation factor G a second chance to translocate the tRNAs correctly. Binds to ribosomes in a GTP-dependent manner.</text>
</comment>
<comment type="catalytic activity">
    <reaction evidence="1">
        <text>GTP + H2O = GDP + phosphate + H(+)</text>
        <dbReference type="Rhea" id="RHEA:19669"/>
        <dbReference type="ChEBI" id="CHEBI:15377"/>
        <dbReference type="ChEBI" id="CHEBI:15378"/>
        <dbReference type="ChEBI" id="CHEBI:37565"/>
        <dbReference type="ChEBI" id="CHEBI:43474"/>
        <dbReference type="ChEBI" id="CHEBI:58189"/>
        <dbReference type="EC" id="3.6.5.n1"/>
    </reaction>
</comment>
<comment type="subcellular location">
    <subcellularLocation>
        <location evidence="1">Cell membrane</location>
        <topology evidence="1">Peripheral membrane protein</topology>
        <orientation evidence="1">Cytoplasmic side</orientation>
    </subcellularLocation>
</comment>
<comment type="similarity">
    <text evidence="1">Belongs to the TRAFAC class translation factor GTPase superfamily. Classic translation factor GTPase family. LepA subfamily.</text>
</comment>
<accession>Q47RQ0</accession>
<organism>
    <name type="scientific">Thermobifida fusca (strain YX)</name>
    <dbReference type="NCBI Taxonomy" id="269800"/>
    <lineage>
        <taxon>Bacteria</taxon>
        <taxon>Bacillati</taxon>
        <taxon>Actinomycetota</taxon>
        <taxon>Actinomycetes</taxon>
        <taxon>Streptosporangiales</taxon>
        <taxon>Nocardiopsidaceae</taxon>
        <taxon>Thermobifida</taxon>
    </lineage>
</organism>
<proteinExistence type="inferred from homology"/>
<dbReference type="EC" id="3.6.5.n1" evidence="1"/>
<dbReference type="EMBL" id="CP000088">
    <property type="protein sequence ID" value="AAZ54867.1"/>
    <property type="molecule type" value="Genomic_DNA"/>
</dbReference>
<dbReference type="RefSeq" id="WP_011291276.1">
    <property type="nucleotide sequence ID" value="NC_007333.1"/>
</dbReference>
<dbReference type="SMR" id="Q47RQ0"/>
<dbReference type="STRING" id="269800.Tfu_0829"/>
<dbReference type="KEGG" id="tfu:Tfu_0829"/>
<dbReference type="eggNOG" id="COG0481">
    <property type="taxonomic scope" value="Bacteria"/>
</dbReference>
<dbReference type="HOGENOM" id="CLU_009995_3_3_11"/>
<dbReference type="OrthoDB" id="3492050at2"/>
<dbReference type="GO" id="GO:0005886">
    <property type="term" value="C:plasma membrane"/>
    <property type="evidence" value="ECO:0007669"/>
    <property type="project" value="UniProtKB-SubCell"/>
</dbReference>
<dbReference type="GO" id="GO:0005525">
    <property type="term" value="F:GTP binding"/>
    <property type="evidence" value="ECO:0007669"/>
    <property type="project" value="UniProtKB-UniRule"/>
</dbReference>
<dbReference type="GO" id="GO:0003924">
    <property type="term" value="F:GTPase activity"/>
    <property type="evidence" value="ECO:0007669"/>
    <property type="project" value="UniProtKB-UniRule"/>
</dbReference>
<dbReference type="GO" id="GO:0043022">
    <property type="term" value="F:ribosome binding"/>
    <property type="evidence" value="ECO:0007669"/>
    <property type="project" value="UniProtKB-UniRule"/>
</dbReference>
<dbReference type="GO" id="GO:0003746">
    <property type="term" value="F:translation elongation factor activity"/>
    <property type="evidence" value="ECO:0007669"/>
    <property type="project" value="UniProtKB-UniRule"/>
</dbReference>
<dbReference type="GO" id="GO:0045727">
    <property type="term" value="P:positive regulation of translation"/>
    <property type="evidence" value="ECO:0007669"/>
    <property type="project" value="UniProtKB-UniRule"/>
</dbReference>
<dbReference type="CDD" id="cd03699">
    <property type="entry name" value="EF4_II"/>
    <property type="match status" value="1"/>
</dbReference>
<dbReference type="CDD" id="cd16260">
    <property type="entry name" value="EF4_III"/>
    <property type="match status" value="1"/>
</dbReference>
<dbReference type="CDD" id="cd01890">
    <property type="entry name" value="LepA"/>
    <property type="match status" value="1"/>
</dbReference>
<dbReference type="CDD" id="cd03709">
    <property type="entry name" value="lepA_C"/>
    <property type="match status" value="1"/>
</dbReference>
<dbReference type="FunFam" id="3.40.50.300:FF:000078">
    <property type="entry name" value="Elongation factor 4"/>
    <property type="match status" value="1"/>
</dbReference>
<dbReference type="FunFam" id="2.40.30.10:FF:000015">
    <property type="entry name" value="Translation factor GUF1, mitochondrial"/>
    <property type="match status" value="1"/>
</dbReference>
<dbReference type="FunFam" id="3.30.70.240:FF:000007">
    <property type="entry name" value="Translation factor GUF1, mitochondrial"/>
    <property type="match status" value="1"/>
</dbReference>
<dbReference type="FunFam" id="3.30.70.2570:FF:000001">
    <property type="entry name" value="Translation factor GUF1, mitochondrial"/>
    <property type="match status" value="1"/>
</dbReference>
<dbReference type="FunFam" id="3.30.70.870:FF:000004">
    <property type="entry name" value="Translation factor GUF1, mitochondrial"/>
    <property type="match status" value="1"/>
</dbReference>
<dbReference type="Gene3D" id="3.30.70.240">
    <property type="match status" value="1"/>
</dbReference>
<dbReference type="Gene3D" id="3.30.70.2570">
    <property type="entry name" value="Elongation factor 4, C-terminal domain"/>
    <property type="match status" value="1"/>
</dbReference>
<dbReference type="Gene3D" id="3.30.70.870">
    <property type="entry name" value="Elongation Factor G (Translational Gtpase), domain 3"/>
    <property type="match status" value="1"/>
</dbReference>
<dbReference type="Gene3D" id="3.40.50.300">
    <property type="entry name" value="P-loop containing nucleotide triphosphate hydrolases"/>
    <property type="match status" value="1"/>
</dbReference>
<dbReference type="Gene3D" id="2.40.30.10">
    <property type="entry name" value="Translation factors"/>
    <property type="match status" value="1"/>
</dbReference>
<dbReference type="HAMAP" id="MF_00071">
    <property type="entry name" value="LepA"/>
    <property type="match status" value="1"/>
</dbReference>
<dbReference type="InterPro" id="IPR006297">
    <property type="entry name" value="EF-4"/>
</dbReference>
<dbReference type="InterPro" id="IPR035647">
    <property type="entry name" value="EFG_III/V"/>
</dbReference>
<dbReference type="InterPro" id="IPR000640">
    <property type="entry name" value="EFG_V-like"/>
</dbReference>
<dbReference type="InterPro" id="IPR004161">
    <property type="entry name" value="EFTu-like_2"/>
</dbReference>
<dbReference type="InterPro" id="IPR031157">
    <property type="entry name" value="G_TR_CS"/>
</dbReference>
<dbReference type="InterPro" id="IPR038363">
    <property type="entry name" value="LepA_C_sf"/>
</dbReference>
<dbReference type="InterPro" id="IPR013842">
    <property type="entry name" value="LepA_CTD"/>
</dbReference>
<dbReference type="InterPro" id="IPR035654">
    <property type="entry name" value="LepA_IV"/>
</dbReference>
<dbReference type="InterPro" id="IPR027417">
    <property type="entry name" value="P-loop_NTPase"/>
</dbReference>
<dbReference type="InterPro" id="IPR005225">
    <property type="entry name" value="Small_GTP-bd"/>
</dbReference>
<dbReference type="InterPro" id="IPR000795">
    <property type="entry name" value="T_Tr_GTP-bd_dom"/>
</dbReference>
<dbReference type="InterPro" id="IPR009000">
    <property type="entry name" value="Transl_B-barrel_sf"/>
</dbReference>
<dbReference type="NCBIfam" id="TIGR01393">
    <property type="entry name" value="lepA"/>
    <property type="match status" value="1"/>
</dbReference>
<dbReference type="NCBIfam" id="TIGR00231">
    <property type="entry name" value="small_GTP"/>
    <property type="match status" value="1"/>
</dbReference>
<dbReference type="PANTHER" id="PTHR43512:SF4">
    <property type="entry name" value="TRANSLATION FACTOR GUF1 HOMOLOG, CHLOROPLASTIC"/>
    <property type="match status" value="1"/>
</dbReference>
<dbReference type="PANTHER" id="PTHR43512">
    <property type="entry name" value="TRANSLATION FACTOR GUF1-RELATED"/>
    <property type="match status" value="1"/>
</dbReference>
<dbReference type="Pfam" id="PF00679">
    <property type="entry name" value="EFG_C"/>
    <property type="match status" value="1"/>
</dbReference>
<dbReference type="Pfam" id="PF00009">
    <property type="entry name" value="GTP_EFTU"/>
    <property type="match status" value="1"/>
</dbReference>
<dbReference type="Pfam" id="PF03144">
    <property type="entry name" value="GTP_EFTU_D2"/>
    <property type="match status" value="1"/>
</dbReference>
<dbReference type="Pfam" id="PF06421">
    <property type="entry name" value="LepA_C"/>
    <property type="match status" value="1"/>
</dbReference>
<dbReference type="PRINTS" id="PR00315">
    <property type="entry name" value="ELONGATNFCT"/>
</dbReference>
<dbReference type="SMART" id="SM00838">
    <property type="entry name" value="EFG_C"/>
    <property type="match status" value="1"/>
</dbReference>
<dbReference type="SUPFAM" id="SSF54980">
    <property type="entry name" value="EF-G C-terminal domain-like"/>
    <property type="match status" value="2"/>
</dbReference>
<dbReference type="SUPFAM" id="SSF52540">
    <property type="entry name" value="P-loop containing nucleoside triphosphate hydrolases"/>
    <property type="match status" value="1"/>
</dbReference>
<dbReference type="SUPFAM" id="SSF50447">
    <property type="entry name" value="Translation proteins"/>
    <property type="match status" value="1"/>
</dbReference>
<dbReference type="PROSITE" id="PS00301">
    <property type="entry name" value="G_TR_1"/>
    <property type="match status" value="1"/>
</dbReference>
<dbReference type="PROSITE" id="PS51722">
    <property type="entry name" value="G_TR_2"/>
    <property type="match status" value="1"/>
</dbReference>
<protein>
    <recommendedName>
        <fullName evidence="1">Elongation factor 4</fullName>
        <shortName evidence="1">EF-4</shortName>
        <ecNumber evidence="1">3.6.5.n1</ecNumber>
    </recommendedName>
    <alternativeName>
        <fullName evidence="1">Ribosomal back-translocase LepA</fullName>
    </alternativeName>
</protein>
<feature type="chain" id="PRO_0000224805" description="Elongation factor 4">
    <location>
        <begin position="1"/>
        <end position="614"/>
    </location>
</feature>
<feature type="domain" description="tr-type G">
    <location>
        <begin position="10"/>
        <end position="192"/>
    </location>
</feature>
<feature type="binding site" evidence="1">
    <location>
        <begin position="22"/>
        <end position="27"/>
    </location>
    <ligand>
        <name>GTP</name>
        <dbReference type="ChEBI" id="CHEBI:37565"/>
    </ligand>
</feature>
<feature type="binding site" evidence="1">
    <location>
        <begin position="139"/>
        <end position="142"/>
    </location>
    <ligand>
        <name>GTP</name>
        <dbReference type="ChEBI" id="CHEBI:37565"/>
    </ligand>
</feature>
<sequence length="614" mass="67745">MPQPTRTDPALIRNFCIIAHIDHGKSTLADRMLQLTGVVEERQMRAQYLDRMDIERERGITIKSQAVRLPFTALDDVTYILNLIDTPGHVDFSYEVSRSLAACEGAILLVDAAQGIEAQTLANLYMALEHDLTIIPVLNKIDLPAAQPEKYAAELAGIIGCEPSDVLRVSAKTGEGVEELLNEIVARIPPPVGNADGPARALIFDSVYDTYRGVVTYVRVVDGQITNRERIQMMSTGATHEMLEVGVISPEPTKVDSLGVGEVGYLITGVKDVRQSRVGDTITSAAAPAAEVLPGYRDPKPMVFSGLYPIDGTDYPVLRDALEKLQLNDAALVFEPETSAALGFGFRCGFLGLLHLEITRDRLEREFDLALISTAPNVVYRVRMEDGTEHTVTNPSEFPSGKIAEIREPVVKATVLTPSDYVGPIMELCQGRRGVLDGMEYLSEDRVEMRYTLPLAEIVFDFFDQLKSRTKGYASLDYEPSGEQAADLVKVDILLQGQVVDAFSAIVHRDNAYSYGAEMTKKLRELIPRQQFEVPIQAAIGSRVIARENIRALRKDVLAKCYGGDISRKRKLLEKQKEGKKRMKMVGRVEVPQEAFISALSTESSGEGKDGKKK</sequence>
<keyword id="KW-1003">Cell membrane</keyword>
<keyword id="KW-0342">GTP-binding</keyword>
<keyword id="KW-0378">Hydrolase</keyword>
<keyword id="KW-0472">Membrane</keyword>
<keyword id="KW-0547">Nucleotide-binding</keyword>
<keyword id="KW-0648">Protein biosynthesis</keyword>
<name>LEPA_THEFY</name>
<reference key="1">
    <citation type="journal article" date="2007" name="J. Bacteriol.">
        <title>Genome sequence and analysis of the soil cellulolytic actinomycete Thermobifida fusca YX.</title>
        <authorList>
            <person name="Lykidis A."/>
            <person name="Mavromatis K."/>
            <person name="Ivanova N."/>
            <person name="Anderson I."/>
            <person name="Land M."/>
            <person name="DiBartolo G."/>
            <person name="Martinez M."/>
            <person name="Lapidus A."/>
            <person name="Lucas S."/>
            <person name="Copeland A."/>
            <person name="Richardson P."/>
            <person name="Wilson D.B."/>
            <person name="Kyrpides N."/>
        </authorList>
    </citation>
    <scope>NUCLEOTIDE SEQUENCE [LARGE SCALE GENOMIC DNA]</scope>
    <source>
        <strain>YX</strain>
    </source>
</reference>
<gene>
    <name evidence="1" type="primary">lepA</name>
    <name type="ordered locus">Tfu_0829</name>
</gene>